<feature type="chain" id="PRO_0000271915" description="MAP6 domain-containing protein 1">
    <location>
        <begin position="1"/>
        <end position="199"/>
    </location>
</feature>
<feature type="region of interest" description="Disordered" evidence="3">
    <location>
        <begin position="33"/>
        <end position="110"/>
    </location>
</feature>
<feature type="region of interest" description="Mn 1" evidence="6">
    <location>
        <begin position="130"/>
        <end position="143"/>
    </location>
</feature>
<feature type="region of interest" description="Mn 2" evidence="6">
    <location>
        <begin position="165"/>
        <end position="177"/>
    </location>
</feature>
<feature type="modified residue" description="Phosphoserine" evidence="2">
    <location>
        <position position="38"/>
    </location>
</feature>
<feature type="modified residue" description="Phosphoserine" evidence="2">
    <location>
        <position position="167"/>
    </location>
</feature>
<feature type="lipid moiety-binding region" description="S-palmitoyl cysteine" evidence="4">
    <location>
        <position position="5"/>
    </location>
</feature>
<feature type="lipid moiety-binding region" description="S-palmitoyl cysteine" evidence="4">
    <location>
        <position position="10"/>
    </location>
</feature>
<feature type="lipid moiety-binding region" description="S-palmitoyl cysteine" evidence="4">
    <location>
        <position position="11"/>
    </location>
</feature>
<feature type="mutagenesis site" description="Loss of Golgi colocalization and gain of microtubule colocalization; when associated with C-10 and C-11." evidence="4">
    <original>C</original>
    <variation>G</variation>
    <location>
        <position position="5"/>
    </location>
</feature>
<feature type="mutagenesis site" description="Loss of Golgi colocalization and gain of microtubule colocalization; when associated with C-5 and C-11." evidence="4">
    <original>C</original>
    <variation>G</variation>
    <location>
        <position position="10"/>
    </location>
</feature>
<feature type="mutagenesis site" description="Loss of Golgi colocalization and gain of microtubule colocalization; when associated with C-5 and C-10." evidence="4">
    <original>C</original>
    <variation>G</variation>
    <location>
        <position position="11"/>
    </location>
</feature>
<name>MA6D1_HUMAN</name>
<gene>
    <name type="primary">MAP6D1</name>
</gene>
<evidence type="ECO:0000250" key="1"/>
<evidence type="ECO:0000250" key="2">
    <source>
        <dbReference type="UniProtKB" id="Q14BB9"/>
    </source>
</evidence>
<evidence type="ECO:0000256" key="3">
    <source>
        <dbReference type="SAM" id="MobiDB-lite"/>
    </source>
</evidence>
<evidence type="ECO:0000269" key="4">
    <source>
    </source>
</evidence>
<evidence type="ECO:0000305" key="5"/>
<evidence type="ECO:0000305" key="6">
    <source>
    </source>
</evidence>
<comment type="function">
    <text evidence="1">May have microtubule-stabilizing activity.</text>
</comment>
<comment type="subunit">
    <text evidence="1">Interacts with calmodulin.</text>
</comment>
<comment type="subcellular location">
    <subcellularLocation>
        <location>Golgi apparatus</location>
    </subcellularLocation>
    <subcellularLocation>
        <location evidence="1">Cytoplasm</location>
        <location evidence="1">Cytoskeleton</location>
    </subcellularLocation>
    <text evidence="1">Colocalizes with microtubules.</text>
</comment>
<comment type="PTM">
    <text evidence="4">Palmitoylated. Palmitoylation enhances association with microtubules.</text>
</comment>
<comment type="similarity">
    <text evidence="5">Belongs to the STOP family.</text>
</comment>
<accession>Q9H9H5</accession>
<proteinExistence type="evidence at protein level"/>
<dbReference type="EMBL" id="AK022810">
    <property type="protein sequence ID" value="BAB14254.1"/>
    <property type="molecule type" value="mRNA"/>
</dbReference>
<dbReference type="EMBL" id="BC006434">
    <property type="protein sequence ID" value="AAH06434.1"/>
    <property type="molecule type" value="mRNA"/>
</dbReference>
<dbReference type="CCDS" id="CCDS3247.1"/>
<dbReference type="RefSeq" id="NP_079147.1">
    <property type="nucleotide sequence ID" value="NM_024871.4"/>
</dbReference>
<dbReference type="BioGRID" id="123004">
    <property type="interactions" value="2"/>
</dbReference>
<dbReference type="FunCoup" id="Q9H9H5">
    <property type="interactions" value="136"/>
</dbReference>
<dbReference type="IntAct" id="Q9H9H5">
    <property type="interactions" value="1"/>
</dbReference>
<dbReference type="STRING" id="9606.ENSP00000314560"/>
<dbReference type="GlyGen" id="Q9H9H5">
    <property type="glycosylation" value="1 site, 1 O-linked glycan (1 site)"/>
</dbReference>
<dbReference type="PhosphoSitePlus" id="Q9H9H5"/>
<dbReference type="SwissPalm" id="Q9H9H5"/>
<dbReference type="BioMuta" id="MAP6D1"/>
<dbReference type="DMDM" id="74734016"/>
<dbReference type="jPOST" id="Q9H9H5"/>
<dbReference type="MassIVE" id="Q9H9H5"/>
<dbReference type="PaxDb" id="9606-ENSP00000314560"/>
<dbReference type="PeptideAtlas" id="Q9H9H5"/>
<dbReference type="ProteomicsDB" id="81323"/>
<dbReference type="Antibodypedia" id="50914">
    <property type="antibodies" value="18 antibodies from 10 providers"/>
</dbReference>
<dbReference type="DNASU" id="79929"/>
<dbReference type="Ensembl" id="ENST00000318631.8">
    <property type="protein sequence ID" value="ENSP00000314560.4"/>
    <property type="gene ID" value="ENSG00000180834.8"/>
</dbReference>
<dbReference type="GeneID" id="79929"/>
<dbReference type="KEGG" id="hsa:79929"/>
<dbReference type="MANE-Select" id="ENST00000318631.8">
    <property type="protein sequence ID" value="ENSP00000314560.4"/>
    <property type="RefSeq nucleotide sequence ID" value="NM_024871.4"/>
    <property type="RefSeq protein sequence ID" value="NP_079147.1"/>
</dbReference>
<dbReference type="UCSC" id="uc003fmc.3">
    <property type="organism name" value="human"/>
</dbReference>
<dbReference type="AGR" id="HGNC:25753"/>
<dbReference type="CTD" id="79929"/>
<dbReference type="DisGeNET" id="79929"/>
<dbReference type="GeneCards" id="MAP6D1"/>
<dbReference type="HGNC" id="HGNC:25753">
    <property type="gene designation" value="MAP6D1"/>
</dbReference>
<dbReference type="HPA" id="ENSG00000180834">
    <property type="expression patterns" value="Tissue enriched (brain)"/>
</dbReference>
<dbReference type="MIM" id="610593">
    <property type="type" value="gene"/>
</dbReference>
<dbReference type="neXtProt" id="NX_Q9H9H5"/>
<dbReference type="OpenTargets" id="ENSG00000180834"/>
<dbReference type="PharmGKB" id="PA142671480"/>
<dbReference type="VEuPathDB" id="HostDB:ENSG00000180834"/>
<dbReference type="eggNOG" id="ENOG502RXB9">
    <property type="taxonomic scope" value="Eukaryota"/>
</dbReference>
<dbReference type="GeneTree" id="ENSGT00530000063947"/>
<dbReference type="HOGENOM" id="CLU_089524_0_0_1"/>
<dbReference type="InParanoid" id="Q9H9H5"/>
<dbReference type="OMA" id="PREDYQP"/>
<dbReference type="OrthoDB" id="9632339at2759"/>
<dbReference type="PAN-GO" id="Q9H9H5">
    <property type="GO annotations" value="6 GO annotations based on evolutionary models"/>
</dbReference>
<dbReference type="PhylomeDB" id="Q9H9H5"/>
<dbReference type="TreeFam" id="TF338320"/>
<dbReference type="PathwayCommons" id="Q9H9H5"/>
<dbReference type="SignaLink" id="Q9H9H5"/>
<dbReference type="BioGRID-ORCS" id="79929">
    <property type="hits" value="13 hits in 1150 CRISPR screens"/>
</dbReference>
<dbReference type="CD-CODE" id="FB4E32DD">
    <property type="entry name" value="Presynaptic clusters and postsynaptic densities"/>
</dbReference>
<dbReference type="ChiTaRS" id="MAP6D1">
    <property type="organism name" value="human"/>
</dbReference>
<dbReference type="GenomeRNAi" id="79929"/>
<dbReference type="Pharos" id="Q9H9H5">
    <property type="development level" value="Tdark"/>
</dbReference>
<dbReference type="PRO" id="PR:Q9H9H5"/>
<dbReference type="Proteomes" id="UP000005640">
    <property type="component" value="Chromosome 3"/>
</dbReference>
<dbReference type="RNAct" id="Q9H9H5">
    <property type="molecule type" value="protein"/>
</dbReference>
<dbReference type="Bgee" id="ENSG00000180834">
    <property type="expression patterns" value="Expressed in C1 segment of cervical spinal cord and 95 other cell types or tissues"/>
</dbReference>
<dbReference type="ExpressionAtlas" id="Q9H9H5">
    <property type="expression patterns" value="baseline and differential"/>
</dbReference>
<dbReference type="GO" id="GO:0005801">
    <property type="term" value="C:cis-Golgi network"/>
    <property type="evidence" value="ECO:0000318"/>
    <property type="project" value="GO_Central"/>
</dbReference>
<dbReference type="GO" id="GO:0005798">
    <property type="term" value="C:Golgi-associated vesicle"/>
    <property type="evidence" value="ECO:0000318"/>
    <property type="project" value="GO_Central"/>
</dbReference>
<dbReference type="GO" id="GO:0005874">
    <property type="term" value="C:microtubule"/>
    <property type="evidence" value="ECO:0000318"/>
    <property type="project" value="GO_Central"/>
</dbReference>
<dbReference type="GO" id="GO:0005516">
    <property type="term" value="F:calmodulin binding"/>
    <property type="evidence" value="ECO:0007669"/>
    <property type="project" value="UniProtKB-KW"/>
</dbReference>
<dbReference type="GO" id="GO:0008017">
    <property type="term" value="F:microtubule binding"/>
    <property type="evidence" value="ECO:0000318"/>
    <property type="project" value="GO_Central"/>
</dbReference>
<dbReference type="GO" id="GO:0030705">
    <property type="term" value="P:cytoskeleton-dependent intracellular transport"/>
    <property type="evidence" value="ECO:0000318"/>
    <property type="project" value="GO_Central"/>
</dbReference>
<dbReference type="GO" id="GO:0000226">
    <property type="term" value="P:microtubule cytoskeleton organization"/>
    <property type="evidence" value="ECO:0007669"/>
    <property type="project" value="InterPro"/>
</dbReference>
<dbReference type="GO" id="GO:0007026">
    <property type="term" value="P:negative regulation of microtubule depolymerization"/>
    <property type="evidence" value="ECO:0007669"/>
    <property type="project" value="Ensembl"/>
</dbReference>
<dbReference type="GO" id="GO:0070507">
    <property type="term" value="P:regulation of microtubule cytoskeleton organization"/>
    <property type="evidence" value="ECO:0000318"/>
    <property type="project" value="GO_Central"/>
</dbReference>
<dbReference type="InterPro" id="IPR007882">
    <property type="entry name" value="MAP6"/>
</dbReference>
<dbReference type="PANTHER" id="PTHR14759:SF37">
    <property type="entry name" value="MAP6 DOMAIN-CONTAINING PROTEIN 1"/>
    <property type="match status" value="1"/>
</dbReference>
<dbReference type="PANTHER" id="PTHR14759">
    <property type="entry name" value="STOP PROTEIN"/>
    <property type="match status" value="1"/>
</dbReference>
<protein>
    <recommendedName>
        <fullName>MAP6 domain-containing protein 1</fullName>
    </recommendedName>
    <alternativeName>
        <fullName>21 kDa STOP-like protein</fullName>
        <shortName>SL21</shortName>
    </alternativeName>
</protein>
<sequence>MAWPCISRLCCLARRWNQLDRSDVAVPLTLHGYSDLDSEEPGTGGAASRRGQPPAGARDSGRDVPLTQYQRDFGLWTTPAGPKDPPPGRGPGAGGRRGKSSAQSSAPPAPGARGVYVLPIGDADAAAAVTTSYRQEFQAWTGVKPSRSTKTKPARVITTHTSGWDSSPGAGFQVPEVRKKFTPNPSAIFQASAPRILNV</sequence>
<keyword id="KW-0112">Calmodulin-binding</keyword>
<keyword id="KW-0963">Cytoplasm</keyword>
<keyword id="KW-0206">Cytoskeleton</keyword>
<keyword id="KW-0333">Golgi apparatus</keyword>
<keyword id="KW-0449">Lipoprotein</keyword>
<keyword id="KW-0564">Palmitate</keyword>
<keyword id="KW-0597">Phosphoprotein</keyword>
<keyword id="KW-1267">Proteomics identification</keyword>
<keyword id="KW-1185">Reference proteome</keyword>
<reference key="1">
    <citation type="journal article" date="2004" name="Nat. Genet.">
        <title>Complete sequencing and characterization of 21,243 full-length human cDNAs.</title>
        <authorList>
            <person name="Ota T."/>
            <person name="Suzuki Y."/>
            <person name="Nishikawa T."/>
            <person name="Otsuki T."/>
            <person name="Sugiyama T."/>
            <person name="Irie R."/>
            <person name="Wakamatsu A."/>
            <person name="Hayashi K."/>
            <person name="Sato H."/>
            <person name="Nagai K."/>
            <person name="Kimura K."/>
            <person name="Makita H."/>
            <person name="Sekine M."/>
            <person name="Obayashi M."/>
            <person name="Nishi T."/>
            <person name="Shibahara T."/>
            <person name="Tanaka T."/>
            <person name="Ishii S."/>
            <person name="Yamamoto J."/>
            <person name="Saito K."/>
            <person name="Kawai Y."/>
            <person name="Isono Y."/>
            <person name="Nakamura Y."/>
            <person name="Nagahari K."/>
            <person name="Murakami K."/>
            <person name="Yasuda T."/>
            <person name="Iwayanagi T."/>
            <person name="Wagatsuma M."/>
            <person name="Shiratori A."/>
            <person name="Sudo H."/>
            <person name="Hosoiri T."/>
            <person name="Kaku Y."/>
            <person name="Kodaira H."/>
            <person name="Kondo H."/>
            <person name="Sugawara M."/>
            <person name="Takahashi M."/>
            <person name="Kanda K."/>
            <person name="Yokoi T."/>
            <person name="Furuya T."/>
            <person name="Kikkawa E."/>
            <person name="Omura Y."/>
            <person name="Abe K."/>
            <person name="Kamihara K."/>
            <person name="Katsuta N."/>
            <person name="Sato K."/>
            <person name="Tanikawa M."/>
            <person name="Yamazaki M."/>
            <person name="Ninomiya K."/>
            <person name="Ishibashi T."/>
            <person name="Yamashita H."/>
            <person name="Murakawa K."/>
            <person name="Fujimori K."/>
            <person name="Tanai H."/>
            <person name="Kimata M."/>
            <person name="Watanabe M."/>
            <person name="Hiraoka S."/>
            <person name="Chiba Y."/>
            <person name="Ishida S."/>
            <person name="Ono Y."/>
            <person name="Takiguchi S."/>
            <person name="Watanabe S."/>
            <person name="Yosida M."/>
            <person name="Hotuta T."/>
            <person name="Kusano J."/>
            <person name="Kanehori K."/>
            <person name="Takahashi-Fujii A."/>
            <person name="Hara H."/>
            <person name="Tanase T.-O."/>
            <person name="Nomura Y."/>
            <person name="Togiya S."/>
            <person name="Komai F."/>
            <person name="Hara R."/>
            <person name="Takeuchi K."/>
            <person name="Arita M."/>
            <person name="Imose N."/>
            <person name="Musashino K."/>
            <person name="Yuuki H."/>
            <person name="Oshima A."/>
            <person name="Sasaki N."/>
            <person name="Aotsuka S."/>
            <person name="Yoshikawa Y."/>
            <person name="Matsunawa H."/>
            <person name="Ichihara T."/>
            <person name="Shiohata N."/>
            <person name="Sano S."/>
            <person name="Moriya S."/>
            <person name="Momiyama H."/>
            <person name="Satoh N."/>
            <person name="Takami S."/>
            <person name="Terashima Y."/>
            <person name="Suzuki O."/>
            <person name="Nakagawa S."/>
            <person name="Senoh A."/>
            <person name="Mizoguchi H."/>
            <person name="Goto Y."/>
            <person name="Shimizu F."/>
            <person name="Wakebe H."/>
            <person name="Hishigaki H."/>
            <person name="Watanabe T."/>
            <person name="Sugiyama A."/>
            <person name="Takemoto M."/>
            <person name="Kawakami B."/>
            <person name="Yamazaki M."/>
            <person name="Watanabe K."/>
            <person name="Kumagai A."/>
            <person name="Itakura S."/>
            <person name="Fukuzumi Y."/>
            <person name="Fujimori Y."/>
            <person name="Komiyama M."/>
            <person name="Tashiro H."/>
            <person name="Tanigami A."/>
            <person name="Fujiwara T."/>
            <person name="Ono T."/>
            <person name="Yamada K."/>
            <person name="Fujii Y."/>
            <person name="Ozaki K."/>
            <person name="Hirao M."/>
            <person name="Ohmori Y."/>
            <person name="Kawabata A."/>
            <person name="Hikiji T."/>
            <person name="Kobatake N."/>
            <person name="Inagaki H."/>
            <person name="Ikema Y."/>
            <person name="Okamoto S."/>
            <person name="Okitani R."/>
            <person name="Kawakami T."/>
            <person name="Noguchi S."/>
            <person name="Itoh T."/>
            <person name="Shigeta K."/>
            <person name="Senba T."/>
            <person name="Matsumura K."/>
            <person name="Nakajima Y."/>
            <person name="Mizuno T."/>
            <person name="Morinaga M."/>
            <person name="Sasaki M."/>
            <person name="Togashi T."/>
            <person name="Oyama M."/>
            <person name="Hata H."/>
            <person name="Watanabe M."/>
            <person name="Komatsu T."/>
            <person name="Mizushima-Sugano J."/>
            <person name="Satoh T."/>
            <person name="Shirai Y."/>
            <person name="Takahashi Y."/>
            <person name="Nakagawa K."/>
            <person name="Okumura K."/>
            <person name="Nagase T."/>
            <person name="Nomura N."/>
            <person name="Kikuchi H."/>
            <person name="Masuho Y."/>
            <person name="Yamashita R."/>
            <person name="Nakai K."/>
            <person name="Yada T."/>
            <person name="Nakamura Y."/>
            <person name="Ohara O."/>
            <person name="Isogai T."/>
            <person name="Sugano S."/>
        </authorList>
    </citation>
    <scope>NUCLEOTIDE SEQUENCE [LARGE SCALE MRNA]</scope>
</reference>
<reference key="2">
    <citation type="journal article" date="2004" name="Genome Res.">
        <title>The status, quality, and expansion of the NIH full-length cDNA project: the Mammalian Gene Collection (MGC).</title>
        <authorList>
            <consortium name="The MGC Project Team"/>
        </authorList>
    </citation>
    <scope>NUCLEOTIDE SEQUENCE [LARGE SCALE MRNA]</scope>
    <source>
        <tissue>Lung</tissue>
    </source>
</reference>
<reference key="3">
    <citation type="journal article" date="2006" name="J. Biol. Chem.">
        <title>STOP-like protein 21 is a novel member of the STOP family, revealing a Golgi localization of STOP proteins.</title>
        <authorList>
            <person name="Gory-Faure S."/>
            <person name="Windscheid V."/>
            <person name="Bosc C."/>
            <person name="Peris L."/>
            <person name="Proietto D."/>
            <person name="Franck R."/>
            <person name="Denarier E."/>
            <person name="Job D."/>
            <person name="Andrieux A."/>
        </authorList>
    </citation>
    <scope>PALMITOYLATION AT CYS-5; CYS-10 AND CYS-11</scope>
    <scope>MUTAGENESIS OF CYS-5; CYS-10 AND CYS-11</scope>
</reference>
<reference key="4">
    <citation type="journal article" date="2024" name="Nat. Commun.">
        <title>Uncovering structural themes across cilia microtubule inner proteins with implications for human cilia function.</title>
        <authorList>
            <person name="Andersen J.S."/>
            <person name="Vijayakumaran A."/>
            <person name="Godbehere C."/>
            <person name="Lorentzen E."/>
            <person name="Mennella V."/>
            <person name="Schou K.B."/>
        </authorList>
    </citation>
    <scope>IDENTIFICATION OF MN REGIONS</scope>
</reference>
<organism>
    <name type="scientific">Homo sapiens</name>
    <name type="common">Human</name>
    <dbReference type="NCBI Taxonomy" id="9606"/>
    <lineage>
        <taxon>Eukaryota</taxon>
        <taxon>Metazoa</taxon>
        <taxon>Chordata</taxon>
        <taxon>Craniata</taxon>
        <taxon>Vertebrata</taxon>
        <taxon>Euteleostomi</taxon>
        <taxon>Mammalia</taxon>
        <taxon>Eutheria</taxon>
        <taxon>Euarchontoglires</taxon>
        <taxon>Primates</taxon>
        <taxon>Haplorrhini</taxon>
        <taxon>Catarrhini</taxon>
        <taxon>Hominidae</taxon>
        <taxon>Homo</taxon>
    </lineage>
</organism>